<sequence length="126" mass="13411">MSGRGKGAKAKGKAKSRSSRAGLQFPVGRVHRFLRKGNYANRVGAGAPVYLAAVLEYLAAEILELAGNAARDNKKTRIIPRHLQLAIRNDEELNKLLGGVTIAQGGVLPNIQAVLLPKKTGSKSSK</sequence>
<proteinExistence type="evidence at protein level"/>
<name>H2A_PARAN</name>
<feature type="initiator methionine" description="Removed" evidence="3">
    <location>
        <position position="1"/>
    </location>
</feature>
<feature type="chain" id="PRO_0000055261" description="Histone H2A, gonadal">
    <location>
        <begin position="2"/>
        <end position="126"/>
    </location>
</feature>
<feature type="region of interest" description="Disordered" evidence="2">
    <location>
        <begin position="1"/>
        <end position="21"/>
    </location>
</feature>
<feature type="compositionally biased region" description="Basic residues" evidence="2">
    <location>
        <begin position="1"/>
        <end position="18"/>
    </location>
</feature>
<feature type="modified residue" description="N-acetylserine" evidence="3">
    <location>
        <position position="2"/>
    </location>
</feature>
<feature type="modified residue" description="Phosphoserine" evidence="1">
    <location>
        <position position="2"/>
    </location>
</feature>
<feature type="modified residue" description="N5-methylglutamine" evidence="1">
    <location>
        <position position="104"/>
    </location>
</feature>
<feature type="cross-link" description="Glycyl lysine isopeptide (Lys-Gly) (interchain with G-Cter in ubiquitin)" evidence="1">
    <location>
        <position position="119"/>
    </location>
</feature>
<accession>P69140</accession>
<accession>P02265</accession>
<dbReference type="PIR" id="A37574">
    <property type="entry name" value="HSUR9P"/>
</dbReference>
<dbReference type="SMR" id="P69140"/>
<dbReference type="iPTMnet" id="P69140"/>
<dbReference type="GO" id="GO:0000786">
    <property type="term" value="C:nucleosome"/>
    <property type="evidence" value="ECO:0007669"/>
    <property type="project" value="UniProtKB-KW"/>
</dbReference>
<dbReference type="GO" id="GO:0005634">
    <property type="term" value="C:nucleus"/>
    <property type="evidence" value="ECO:0007669"/>
    <property type="project" value="UniProtKB-SubCell"/>
</dbReference>
<dbReference type="GO" id="GO:0003677">
    <property type="term" value="F:DNA binding"/>
    <property type="evidence" value="ECO:0007669"/>
    <property type="project" value="UniProtKB-KW"/>
</dbReference>
<dbReference type="GO" id="GO:0046982">
    <property type="term" value="F:protein heterodimerization activity"/>
    <property type="evidence" value="ECO:0007669"/>
    <property type="project" value="InterPro"/>
</dbReference>
<dbReference type="GO" id="GO:0030527">
    <property type="term" value="F:structural constituent of chromatin"/>
    <property type="evidence" value="ECO:0007669"/>
    <property type="project" value="InterPro"/>
</dbReference>
<dbReference type="CDD" id="cd00074">
    <property type="entry name" value="HFD_H2A"/>
    <property type="match status" value="1"/>
</dbReference>
<dbReference type="FunFam" id="1.10.20.10:FF:000020">
    <property type="entry name" value="Histone H2A"/>
    <property type="match status" value="1"/>
</dbReference>
<dbReference type="Gene3D" id="1.10.20.10">
    <property type="entry name" value="Histone, subunit A"/>
    <property type="match status" value="1"/>
</dbReference>
<dbReference type="InterPro" id="IPR009072">
    <property type="entry name" value="Histone-fold"/>
</dbReference>
<dbReference type="InterPro" id="IPR002119">
    <property type="entry name" value="Histone_H2A"/>
</dbReference>
<dbReference type="InterPro" id="IPR007125">
    <property type="entry name" value="Histone_H2A/H2B/H3"/>
</dbReference>
<dbReference type="InterPro" id="IPR032454">
    <property type="entry name" value="Histone_H2A_C"/>
</dbReference>
<dbReference type="InterPro" id="IPR032458">
    <property type="entry name" value="Histone_H2A_CS"/>
</dbReference>
<dbReference type="PANTHER" id="PTHR23430">
    <property type="entry name" value="HISTONE H2A"/>
    <property type="match status" value="1"/>
</dbReference>
<dbReference type="Pfam" id="PF00125">
    <property type="entry name" value="Histone"/>
    <property type="match status" value="1"/>
</dbReference>
<dbReference type="Pfam" id="PF16211">
    <property type="entry name" value="Histone_H2A_C"/>
    <property type="match status" value="1"/>
</dbReference>
<dbReference type="PRINTS" id="PR00620">
    <property type="entry name" value="HISTONEH2A"/>
</dbReference>
<dbReference type="SMART" id="SM00414">
    <property type="entry name" value="H2A"/>
    <property type="match status" value="1"/>
</dbReference>
<dbReference type="SUPFAM" id="SSF47113">
    <property type="entry name" value="Histone-fold"/>
    <property type="match status" value="1"/>
</dbReference>
<dbReference type="PROSITE" id="PS00046">
    <property type="entry name" value="HISTONE_H2A"/>
    <property type="match status" value="1"/>
</dbReference>
<protein>
    <recommendedName>
        <fullName>Histone H2A, gonadal</fullName>
    </recommendedName>
</protein>
<evidence type="ECO:0000250" key="1"/>
<evidence type="ECO:0000256" key="2">
    <source>
        <dbReference type="SAM" id="MobiDB-lite"/>
    </source>
</evidence>
<evidence type="ECO:0000269" key="3">
    <source>
    </source>
</evidence>
<evidence type="ECO:0000305" key="4"/>
<reference key="1">
    <citation type="journal article" date="1980" name="Eur. J. Biochem.">
        <title>The primary structure of histone H2A from the sperm cell of the sea urchin Parechinus angulosus.</title>
        <authorList>
            <person name="Strickland W.N."/>
            <person name="Strickland M.S."/>
            <person name="de Groot P.C."/>
            <person name="von Holt C."/>
        </authorList>
    </citation>
    <scope>PROTEIN SEQUENCE OF 2-126</scope>
    <scope>ACETYLATION AT SER-2</scope>
</reference>
<keyword id="KW-0007">Acetylation</keyword>
<keyword id="KW-0158">Chromosome</keyword>
<keyword id="KW-0903">Direct protein sequencing</keyword>
<keyword id="KW-0238">DNA-binding</keyword>
<keyword id="KW-1017">Isopeptide bond</keyword>
<keyword id="KW-0488">Methylation</keyword>
<keyword id="KW-0544">Nucleosome core</keyword>
<keyword id="KW-0539">Nucleus</keyword>
<keyword id="KW-0597">Phosphoprotein</keyword>
<keyword id="KW-0832">Ubl conjugation</keyword>
<organism>
    <name type="scientific">Parechinus angulosus</name>
    <name type="common">Angulate sea urchin</name>
    <name type="synonym">Cidaris angulosus</name>
    <dbReference type="NCBI Taxonomy" id="7658"/>
    <lineage>
        <taxon>Eukaryota</taxon>
        <taxon>Metazoa</taxon>
        <taxon>Echinodermata</taxon>
        <taxon>Eleutherozoa</taxon>
        <taxon>Echinozoa</taxon>
        <taxon>Echinoidea</taxon>
        <taxon>Euechinoidea</taxon>
        <taxon>Echinacea</taxon>
        <taxon>Camarodonta</taxon>
        <taxon>Echinidea</taxon>
        <taxon>Echinidae</taxon>
        <taxon>Parechinus</taxon>
    </lineage>
</organism>
<comment type="function">
    <text>Core component of nucleosome. Nucleosomes wrap and compact DNA into chromatin, limiting DNA accessibility to the cellular machineries which require DNA as a template. Histones thereby play a central role in transcription regulation, DNA repair, DNA replication and chromosomal stability. DNA accessibility is regulated via a complex set of post-translational modifications of histones, also called histone code, and nucleosome remodeling.</text>
</comment>
<comment type="subunit">
    <text>The nucleosome is a histone octamer containing two molecules each of H2A, H2B, H3 and H4 assembled in one H3-H4 heterotetramer and two H2A-H2B heterodimers. The octamer wraps approximately 147 bp of DNA.</text>
</comment>
<comment type="subcellular location">
    <subcellularLocation>
        <location>Nucleus</location>
    </subcellularLocation>
    <subcellularLocation>
        <location>Chromosome</location>
    </subcellularLocation>
</comment>
<comment type="PTM">
    <text evidence="1">Monoubiquitination of Lys-119 gives a specific tag for epigenetic transcriptional repression.</text>
</comment>
<comment type="PTM">
    <text evidence="1">Phosphorylation of Ser-2 directly represses transcription.</text>
</comment>
<comment type="similarity">
    <text evidence="4">Belongs to the histone H2A family.</text>
</comment>